<feature type="chain" id="PRO_1000114302" description="Probable septum site-determining protein MinC">
    <location>
        <begin position="1"/>
        <end position="238"/>
    </location>
</feature>
<proteinExistence type="inferred from homology"/>
<dbReference type="EMBL" id="CP000941">
    <property type="protein sequence ID" value="ACA11678.1"/>
    <property type="molecule type" value="Genomic_DNA"/>
</dbReference>
<dbReference type="RefSeq" id="WP_004083894.1">
    <property type="nucleotide sequence ID" value="NC_010513.1"/>
</dbReference>
<dbReference type="SMR" id="B0U6B6"/>
<dbReference type="KEGG" id="xfm:Xfasm12_0680"/>
<dbReference type="HOGENOM" id="CLU_067812_0_1_6"/>
<dbReference type="GO" id="GO:0000902">
    <property type="term" value="P:cell morphogenesis"/>
    <property type="evidence" value="ECO:0007669"/>
    <property type="project" value="InterPro"/>
</dbReference>
<dbReference type="GO" id="GO:0000917">
    <property type="term" value="P:division septum assembly"/>
    <property type="evidence" value="ECO:0007669"/>
    <property type="project" value="UniProtKB-KW"/>
</dbReference>
<dbReference type="GO" id="GO:0051302">
    <property type="term" value="P:regulation of cell division"/>
    <property type="evidence" value="ECO:0007669"/>
    <property type="project" value="InterPro"/>
</dbReference>
<dbReference type="GO" id="GO:1901891">
    <property type="term" value="P:regulation of cell septum assembly"/>
    <property type="evidence" value="ECO:0007669"/>
    <property type="project" value="InterPro"/>
</dbReference>
<dbReference type="Gene3D" id="2.160.20.70">
    <property type="match status" value="1"/>
</dbReference>
<dbReference type="Gene3D" id="3.30.70.260">
    <property type="match status" value="1"/>
</dbReference>
<dbReference type="HAMAP" id="MF_00267">
    <property type="entry name" value="MinC"/>
    <property type="match status" value="1"/>
</dbReference>
<dbReference type="InterPro" id="IPR016098">
    <property type="entry name" value="CAP/MinC_C"/>
</dbReference>
<dbReference type="InterPro" id="IPR013033">
    <property type="entry name" value="MinC"/>
</dbReference>
<dbReference type="InterPro" id="IPR036145">
    <property type="entry name" value="MinC_C_sf"/>
</dbReference>
<dbReference type="InterPro" id="IPR007874">
    <property type="entry name" value="MinC_N"/>
</dbReference>
<dbReference type="InterPro" id="IPR005526">
    <property type="entry name" value="Septum_form_inhib_MinC_C"/>
</dbReference>
<dbReference type="NCBIfam" id="TIGR01222">
    <property type="entry name" value="minC"/>
    <property type="match status" value="1"/>
</dbReference>
<dbReference type="PANTHER" id="PTHR34108">
    <property type="entry name" value="SEPTUM SITE-DETERMINING PROTEIN MINC"/>
    <property type="match status" value="1"/>
</dbReference>
<dbReference type="PANTHER" id="PTHR34108:SF1">
    <property type="entry name" value="SEPTUM SITE-DETERMINING PROTEIN MINC"/>
    <property type="match status" value="1"/>
</dbReference>
<dbReference type="Pfam" id="PF03775">
    <property type="entry name" value="MinC_C"/>
    <property type="match status" value="1"/>
</dbReference>
<dbReference type="Pfam" id="PF05209">
    <property type="entry name" value="MinC_N"/>
    <property type="match status" value="1"/>
</dbReference>
<dbReference type="SUPFAM" id="SSF63848">
    <property type="entry name" value="Cell-division inhibitor MinC, C-terminal domain"/>
    <property type="match status" value="1"/>
</dbReference>
<gene>
    <name evidence="1" type="primary">minC</name>
    <name type="ordered locus">Xfasm12_0680</name>
</gene>
<evidence type="ECO:0000255" key="1">
    <source>
        <dbReference type="HAMAP-Rule" id="MF_00267"/>
    </source>
</evidence>
<keyword id="KW-0131">Cell cycle</keyword>
<keyword id="KW-0132">Cell division</keyword>
<keyword id="KW-0717">Septation</keyword>
<accession>B0U6B6</accession>
<name>MINC_XYLFM</name>
<protein>
    <recommendedName>
        <fullName evidence="1">Probable septum site-determining protein MinC</fullName>
    </recommendedName>
</protein>
<organism>
    <name type="scientific">Xylella fastidiosa (strain M12)</name>
    <dbReference type="NCBI Taxonomy" id="405440"/>
    <lineage>
        <taxon>Bacteria</taxon>
        <taxon>Pseudomonadati</taxon>
        <taxon>Pseudomonadota</taxon>
        <taxon>Gammaproteobacteria</taxon>
        <taxon>Lysobacterales</taxon>
        <taxon>Lysobacteraceae</taxon>
        <taxon>Xylella</taxon>
    </lineage>
</organism>
<comment type="function">
    <text evidence="1">Cell division inhibitor that blocks the formation of polar Z ring septums. Rapidly oscillates between the poles of the cell to destabilize FtsZ filaments that have formed before they mature into polar Z rings. Prevents FtsZ polymerization.</text>
</comment>
<comment type="subunit">
    <text evidence="1">Interacts with MinD and FtsZ.</text>
</comment>
<comment type="similarity">
    <text evidence="1">Belongs to the MinC family.</text>
</comment>
<reference key="1">
    <citation type="journal article" date="2010" name="J. Bacteriol.">
        <title>Whole genome sequences of two Xylella fastidiosa strains (M12 and M23) causing almond leaf scorch disease in California.</title>
        <authorList>
            <person name="Chen J."/>
            <person name="Xie G."/>
            <person name="Han S."/>
            <person name="Chertkov O."/>
            <person name="Sims D."/>
            <person name="Civerolo E.L."/>
        </authorList>
    </citation>
    <scope>NUCLEOTIDE SEQUENCE [LARGE SCALE GENOMIC DNA]</scope>
    <source>
        <strain>M12</strain>
    </source>
</reference>
<sequence length="238" mass="26137">MSNVNMDFEQAGELKIGQVGIATLRIRTLNVPRLIQEMSDRVTRAPKLFRRTAVILDFGELPHPPDLTTAKALVDGLRAANVLPVAIAYGTNEIDLLSQQLGLPLLSKFRAHYERQEVAAPPPQSTPPINTGRIQHTTVRSGQQLYAEHCDLTILNTVGAGAEVIADGNIHIYGTLRGRAMAGARGNAEMRIFCRDFQAELIAIAGRYKVLDDIPTELRGKAVQVWLEQNQIKIAALD</sequence>